<proteinExistence type="inferred from homology"/>
<reference key="1">
    <citation type="submission" date="2007-11" db="EMBL/GenBank/DDBJ databases">
        <authorList>
            <consortium name="The Salmonella enterica serovar Paratyphi B Genome Sequencing Project"/>
            <person name="McClelland M."/>
            <person name="Sanderson E.K."/>
            <person name="Porwollik S."/>
            <person name="Spieth J."/>
            <person name="Clifton W.S."/>
            <person name="Fulton R."/>
            <person name="Cordes M."/>
            <person name="Wollam A."/>
            <person name="Shah N."/>
            <person name="Pepin K."/>
            <person name="Bhonagiri V."/>
            <person name="Nash W."/>
            <person name="Johnson M."/>
            <person name="Thiruvilangam P."/>
            <person name="Wilson R."/>
        </authorList>
    </citation>
    <scope>NUCLEOTIDE SEQUENCE [LARGE SCALE GENOMIC DNA]</scope>
    <source>
        <strain>ATCC BAA-1250 / SPB7</strain>
    </source>
</reference>
<protein>
    <recommendedName>
        <fullName evidence="1">Probable sugar efflux transporter</fullName>
    </recommendedName>
</protein>
<organism>
    <name type="scientific">Salmonella paratyphi B (strain ATCC BAA-1250 / SPB7)</name>
    <dbReference type="NCBI Taxonomy" id="1016998"/>
    <lineage>
        <taxon>Bacteria</taxon>
        <taxon>Pseudomonadati</taxon>
        <taxon>Pseudomonadota</taxon>
        <taxon>Gammaproteobacteria</taxon>
        <taxon>Enterobacterales</taxon>
        <taxon>Enterobacteriaceae</taxon>
        <taxon>Salmonella</taxon>
    </lineage>
</organism>
<comment type="function">
    <text evidence="1">Involved in the efflux of sugars. The physiological role may be the reduction of the intracellular concentration of toxic sugars or sugar metabolites.</text>
</comment>
<comment type="subcellular location">
    <subcellularLocation>
        <location evidence="1">Cell inner membrane</location>
        <topology evidence="1">Multi-pass membrane protein</topology>
    </subcellularLocation>
</comment>
<comment type="similarity">
    <text evidence="1">Belongs to the major facilitator superfamily. SotB (TC 2.A.1.2) family.</text>
</comment>
<keyword id="KW-0997">Cell inner membrane</keyword>
<keyword id="KW-1003">Cell membrane</keyword>
<keyword id="KW-0472">Membrane</keyword>
<keyword id="KW-0762">Sugar transport</keyword>
<keyword id="KW-0812">Transmembrane</keyword>
<keyword id="KW-1133">Transmembrane helix</keyword>
<keyword id="KW-0813">Transport</keyword>
<sequence length="396" mass="42407">MTINPVSRKVAWLRVVTLAIAAFIFNTTEFVPVGLLSDIAESFHMQTAQVGIMLTIYAWVVAVMSLPFMLLTSQMERRKLLICLFVLFIASHVLSFLAWNFTVLVISRIGIAFAHAIFWSITASLAIRLAPAGKRAQALSLIATGTALAMVLGLPIGRVVGQYFGWRTTFFAIGMGALITLLCLIKLLPKLPSEHSGSLKSLPLLFRRPALMSLYVLTVVVVTAHYTAYSYIEPFVQNVAGLSANFATVLLLILGGAGIIGSLVFGKLGNRHASSLVSIAIALLVVCLLLLLPAADSEAHLAILSIFWGIAIMVIGLGMQVKVLALAPDATDVAMALFSGIFNIGIGAGALVGNQVSLHWSMSAIGYIGAIPACAALVWAVLIFRKWPVTLEEQPH</sequence>
<name>SOTB_SALPB</name>
<feature type="chain" id="PRO_1000081642" description="Probable sugar efflux transporter">
    <location>
        <begin position="1"/>
        <end position="396"/>
    </location>
</feature>
<feature type="transmembrane region" description="Helical" evidence="1">
    <location>
        <begin position="15"/>
        <end position="35"/>
    </location>
</feature>
<feature type="transmembrane region" description="Helical" evidence="1">
    <location>
        <begin position="50"/>
        <end position="70"/>
    </location>
</feature>
<feature type="transmembrane region" description="Helical" evidence="1">
    <location>
        <begin position="81"/>
        <end position="101"/>
    </location>
</feature>
<feature type="transmembrane region" description="Helical" evidence="1">
    <location>
        <begin position="103"/>
        <end position="123"/>
    </location>
</feature>
<feature type="transmembrane region" description="Helical" evidence="1">
    <location>
        <begin position="136"/>
        <end position="156"/>
    </location>
</feature>
<feature type="transmembrane region" description="Helical" evidence="1">
    <location>
        <begin position="169"/>
        <end position="189"/>
    </location>
</feature>
<feature type="transmembrane region" description="Helical" evidence="1">
    <location>
        <begin position="209"/>
        <end position="229"/>
    </location>
</feature>
<feature type="transmembrane region" description="Helical" evidence="1">
    <location>
        <begin position="246"/>
        <end position="266"/>
    </location>
</feature>
<feature type="transmembrane region" description="Helical" evidence="1">
    <location>
        <begin position="275"/>
        <end position="295"/>
    </location>
</feature>
<feature type="transmembrane region" description="Helical" evidence="1">
    <location>
        <begin position="301"/>
        <end position="321"/>
    </location>
</feature>
<feature type="transmembrane region" description="Helical" evidence="1">
    <location>
        <begin position="333"/>
        <end position="353"/>
    </location>
</feature>
<feature type="transmembrane region" description="Helical" evidence="1">
    <location>
        <begin position="364"/>
        <end position="384"/>
    </location>
</feature>
<gene>
    <name evidence="1" type="primary">sotB</name>
    <name type="ordered locus">SPAB_01782</name>
</gene>
<accession>A9MYZ7</accession>
<evidence type="ECO:0000255" key="1">
    <source>
        <dbReference type="HAMAP-Rule" id="MF_00517"/>
    </source>
</evidence>
<dbReference type="EMBL" id="CP000886">
    <property type="protein sequence ID" value="ABX67175.1"/>
    <property type="molecule type" value="Genomic_DNA"/>
</dbReference>
<dbReference type="RefSeq" id="WP_000154617.1">
    <property type="nucleotide sequence ID" value="NC_010102.1"/>
</dbReference>
<dbReference type="SMR" id="A9MYZ7"/>
<dbReference type="KEGG" id="spq:SPAB_01782"/>
<dbReference type="PATRIC" id="fig|1016998.12.peg.1678"/>
<dbReference type="HOGENOM" id="CLU_001265_61_2_6"/>
<dbReference type="BioCyc" id="SENT1016998:SPAB_RS07225-MONOMER"/>
<dbReference type="Proteomes" id="UP000008556">
    <property type="component" value="Chromosome"/>
</dbReference>
<dbReference type="GO" id="GO:0005886">
    <property type="term" value="C:plasma membrane"/>
    <property type="evidence" value="ECO:0007669"/>
    <property type="project" value="UniProtKB-SubCell"/>
</dbReference>
<dbReference type="GO" id="GO:0015144">
    <property type="term" value="F:carbohydrate transmembrane transporter activity"/>
    <property type="evidence" value="ECO:0007669"/>
    <property type="project" value="UniProtKB-UniRule"/>
</dbReference>
<dbReference type="CDD" id="cd17324">
    <property type="entry name" value="MFS_NepI_like"/>
    <property type="match status" value="1"/>
</dbReference>
<dbReference type="Gene3D" id="1.20.1250.20">
    <property type="entry name" value="MFS general substrate transporter like domains"/>
    <property type="match status" value="1"/>
</dbReference>
<dbReference type="HAMAP" id="MF_00517">
    <property type="entry name" value="MFS_SotB"/>
    <property type="match status" value="1"/>
</dbReference>
<dbReference type="InterPro" id="IPR011701">
    <property type="entry name" value="MFS"/>
</dbReference>
<dbReference type="InterPro" id="IPR020846">
    <property type="entry name" value="MFS_dom"/>
</dbReference>
<dbReference type="InterPro" id="IPR050189">
    <property type="entry name" value="MFS_Efflux_Transporters"/>
</dbReference>
<dbReference type="InterPro" id="IPR036259">
    <property type="entry name" value="MFS_trans_sf"/>
</dbReference>
<dbReference type="InterPro" id="IPR023495">
    <property type="entry name" value="Sugar_effux_transptr_put"/>
</dbReference>
<dbReference type="NCBIfam" id="NF002921">
    <property type="entry name" value="PRK03545.1"/>
    <property type="match status" value="1"/>
</dbReference>
<dbReference type="PANTHER" id="PTHR43124">
    <property type="entry name" value="PURINE EFFLUX PUMP PBUE"/>
    <property type="match status" value="1"/>
</dbReference>
<dbReference type="PANTHER" id="PTHR43124:SF4">
    <property type="entry name" value="SUGAR EFFLUX TRANSPORTER"/>
    <property type="match status" value="1"/>
</dbReference>
<dbReference type="Pfam" id="PF07690">
    <property type="entry name" value="MFS_1"/>
    <property type="match status" value="1"/>
</dbReference>
<dbReference type="SUPFAM" id="SSF103473">
    <property type="entry name" value="MFS general substrate transporter"/>
    <property type="match status" value="1"/>
</dbReference>
<dbReference type="PROSITE" id="PS50850">
    <property type="entry name" value="MFS"/>
    <property type="match status" value="1"/>
</dbReference>